<feature type="chain" id="PRO_0000282599" description="Cleavage and polyadenylation specificity factor subunit 6">
    <location>
        <begin position="1"/>
        <end position="551"/>
    </location>
</feature>
<feature type="domain" description="RRM" evidence="3">
    <location>
        <begin position="81"/>
        <end position="161"/>
    </location>
</feature>
<feature type="region of interest" description="Necessary for interaction with NXF1" evidence="1">
    <location>
        <begin position="1"/>
        <end position="213"/>
    </location>
</feature>
<feature type="region of interest" description="Necessary for interaction with NUDT21/CPSF5" evidence="1">
    <location>
        <begin position="81"/>
        <end position="161"/>
    </location>
</feature>
<feature type="region of interest" description="Necessary for nuclear paraspeckles localization" evidence="1">
    <location>
        <begin position="81"/>
        <end position="161"/>
    </location>
</feature>
<feature type="region of interest" description="Disordered" evidence="4">
    <location>
        <begin position="169"/>
        <end position="411"/>
    </location>
</feature>
<feature type="region of interest" description="Sufficient for nuclear speckle localization" evidence="1">
    <location>
        <begin position="404"/>
        <end position="551"/>
    </location>
</feature>
<feature type="region of interest" description="Necessary for RNA-binding" evidence="1">
    <location>
        <begin position="405"/>
        <end position="551"/>
    </location>
</feature>
<feature type="region of interest" description="Disordered" evidence="4">
    <location>
        <begin position="477"/>
        <end position="551"/>
    </location>
</feature>
<feature type="region of interest" description="Necessary for interaction with SRSF3, SRSF7 and TRA2B/SFRS10" evidence="1">
    <location>
        <begin position="481"/>
        <end position="551"/>
    </location>
</feature>
<feature type="region of interest" description="Arg/Ser-rich domain" evidence="1">
    <location>
        <begin position="490"/>
        <end position="551"/>
    </location>
</feature>
<feature type="region of interest" description="Sufficient for nuclear targeting" evidence="1">
    <location>
        <begin position="510"/>
        <end position="551"/>
    </location>
</feature>
<feature type="short sequence motif" description="GAR" evidence="1">
    <location>
        <begin position="202"/>
        <end position="206"/>
    </location>
</feature>
<feature type="compositionally biased region" description="Polar residues" evidence="4">
    <location>
        <begin position="169"/>
        <end position="180"/>
    </location>
</feature>
<feature type="compositionally biased region" description="Low complexity" evidence="4">
    <location>
        <begin position="207"/>
        <end position="219"/>
    </location>
</feature>
<feature type="compositionally biased region" description="Pro residues" evidence="4">
    <location>
        <begin position="220"/>
        <end position="265"/>
    </location>
</feature>
<feature type="compositionally biased region" description="Pro residues" evidence="4">
    <location>
        <begin position="285"/>
        <end position="366"/>
    </location>
</feature>
<feature type="compositionally biased region" description="Pro residues" evidence="4">
    <location>
        <begin position="377"/>
        <end position="388"/>
    </location>
</feature>
<feature type="compositionally biased region" description="Basic and acidic residues" evidence="4">
    <location>
        <begin position="389"/>
        <end position="404"/>
    </location>
</feature>
<feature type="compositionally biased region" description="Basic and acidic residues" evidence="4">
    <location>
        <begin position="489"/>
        <end position="503"/>
    </location>
</feature>
<feature type="compositionally biased region" description="Basic residues" evidence="4">
    <location>
        <begin position="504"/>
        <end position="514"/>
    </location>
</feature>
<feature type="compositionally biased region" description="Basic and acidic residues" evidence="4">
    <location>
        <begin position="515"/>
        <end position="551"/>
    </location>
</feature>
<feature type="modified residue" description="Phosphothreonine" evidence="1">
    <location>
        <position position="157"/>
    </location>
</feature>
<feature type="modified residue" description="Phosphothreonine" evidence="1">
    <location>
        <position position="404"/>
    </location>
</feature>
<feature type="modified residue" description="Phosphothreonine" evidence="1">
    <location>
        <position position="407"/>
    </location>
</feature>
<feature type="modified residue" description="Phosphoserine" evidence="1">
    <location>
        <position position="494"/>
    </location>
</feature>
<feature type="modified residue" description="Phosphoserine" evidence="1">
    <location>
        <position position="500"/>
    </location>
</feature>
<feature type="modified residue" description="Phosphoserine" evidence="1">
    <location>
        <position position="511"/>
    </location>
</feature>
<feature type="modified residue" description="Phosphoserine" evidence="1">
    <location>
        <position position="513"/>
    </location>
</feature>
<feature type="modified residue" description="Phosphoserine" evidence="1">
    <location>
        <position position="525"/>
    </location>
</feature>
<reference key="1">
    <citation type="submission" date="2006-08" db="EMBL/GenBank/DDBJ databases">
        <authorList>
            <consortium name="NIH - Mammalian Gene Collection (MGC) project"/>
        </authorList>
    </citation>
    <scope>NUCLEOTIDE SEQUENCE [LARGE SCALE MRNA]</scope>
    <source>
        <strain>Hereford</strain>
        <tissue>Fetal pons</tissue>
    </source>
</reference>
<dbReference type="EMBL" id="BC120212">
    <property type="protein sequence ID" value="AAI20213.1"/>
    <property type="molecule type" value="mRNA"/>
</dbReference>
<dbReference type="RefSeq" id="NP_001071574.1">
    <property type="nucleotide sequence ID" value="NM_001078106.2"/>
</dbReference>
<dbReference type="SMR" id="Q0P5D2"/>
<dbReference type="FunCoup" id="Q0P5D2">
    <property type="interactions" value="3844"/>
</dbReference>
<dbReference type="STRING" id="9913.ENSBTAP00000070710"/>
<dbReference type="PaxDb" id="9913-ENSBTAP00000047307"/>
<dbReference type="PeptideAtlas" id="Q0P5D2"/>
<dbReference type="GeneID" id="768231"/>
<dbReference type="KEGG" id="bta:768231"/>
<dbReference type="CTD" id="11052"/>
<dbReference type="eggNOG" id="KOG4849">
    <property type="taxonomic scope" value="Eukaryota"/>
</dbReference>
<dbReference type="InParanoid" id="Q0P5D2"/>
<dbReference type="OrthoDB" id="10065185at2759"/>
<dbReference type="Proteomes" id="UP000009136">
    <property type="component" value="Unplaced"/>
</dbReference>
<dbReference type="GO" id="GO:0005737">
    <property type="term" value="C:cytoplasm"/>
    <property type="evidence" value="ECO:0000250"/>
    <property type="project" value="UniProtKB"/>
</dbReference>
<dbReference type="GO" id="GO:0035061">
    <property type="term" value="C:interchromatin granule"/>
    <property type="evidence" value="ECO:0000250"/>
    <property type="project" value="UniProtKB"/>
</dbReference>
<dbReference type="GO" id="GO:0005847">
    <property type="term" value="C:mRNA cleavage and polyadenylation specificity factor complex"/>
    <property type="evidence" value="ECO:0000318"/>
    <property type="project" value="GO_Central"/>
</dbReference>
<dbReference type="GO" id="GO:0005849">
    <property type="term" value="C:mRNA cleavage factor complex"/>
    <property type="evidence" value="ECO:0000250"/>
    <property type="project" value="UniProtKB"/>
</dbReference>
<dbReference type="GO" id="GO:0016607">
    <property type="term" value="C:nuclear speck"/>
    <property type="evidence" value="ECO:0000250"/>
    <property type="project" value="UniProtKB"/>
</dbReference>
<dbReference type="GO" id="GO:0005654">
    <property type="term" value="C:nucleoplasm"/>
    <property type="evidence" value="ECO:0000250"/>
    <property type="project" value="UniProtKB"/>
</dbReference>
<dbReference type="GO" id="GO:0005634">
    <property type="term" value="C:nucleus"/>
    <property type="evidence" value="ECO:0000250"/>
    <property type="project" value="UniProtKB"/>
</dbReference>
<dbReference type="GO" id="GO:0042382">
    <property type="term" value="C:paraspeckles"/>
    <property type="evidence" value="ECO:0000250"/>
    <property type="project" value="UniProtKB"/>
</dbReference>
<dbReference type="GO" id="GO:0005726">
    <property type="term" value="C:perichromatin fibrils"/>
    <property type="evidence" value="ECO:0000250"/>
    <property type="project" value="UniProtKB"/>
</dbReference>
<dbReference type="GO" id="GO:1990448">
    <property type="term" value="F:exon-exon junction complex binding"/>
    <property type="evidence" value="ECO:0000250"/>
    <property type="project" value="UniProtKB"/>
</dbReference>
<dbReference type="GO" id="GO:0003729">
    <property type="term" value="F:mRNA binding"/>
    <property type="evidence" value="ECO:0000250"/>
    <property type="project" value="UniProtKB"/>
</dbReference>
<dbReference type="GO" id="GO:0043023">
    <property type="term" value="F:ribosomal large subunit binding"/>
    <property type="evidence" value="ECO:0000250"/>
    <property type="project" value="UniProtKB"/>
</dbReference>
<dbReference type="GO" id="GO:0180010">
    <property type="term" value="P:co-transcriptional mRNA 3'-end processing, cleavage and polyadenylation pathway"/>
    <property type="evidence" value="ECO:0000250"/>
    <property type="project" value="UniProtKB"/>
</dbReference>
<dbReference type="GO" id="GO:0110104">
    <property type="term" value="P:mRNA alternative polyadenylation"/>
    <property type="evidence" value="ECO:0000250"/>
    <property type="project" value="UniProtKB"/>
</dbReference>
<dbReference type="GO" id="GO:0046833">
    <property type="term" value="P:positive regulation of RNA export from nucleus"/>
    <property type="evidence" value="ECO:0000250"/>
    <property type="project" value="UniProtKB"/>
</dbReference>
<dbReference type="GO" id="GO:0051290">
    <property type="term" value="P:protein heterotetramerization"/>
    <property type="evidence" value="ECO:0000250"/>
    <property type="project" value="UniProtKB"/>
</dbReference>
<dbReference type="CDD" id="cd12643">
    <property type="entry name" value="RRM_CFIm68"/>
    <property type="match status" value="1"/>
</dbReference>
<dbReference type="FunFam" id="3.30.70.330:FF:000081">
    <property type="entry name" value="Cleavage and polyadenylation specificity factor subunit 6"/>
    <property type="match status" value="1"/>
</dbReference>
<dbReference type="Gene3D" id="3.30.70.330">
    <property type="match status" value="1"/>
</dbReference>
<dbReference type="InterPro" id="IPR034772">
    <property type="entry name" value="CPSF6/7"/>
</dbReference>
<dbReference type="InterPro" id="IPR034769">
    <property type="entry name" value="CPSF6_RRM"/>
</dbReference>
<dbReference type="InterPro" id="IPR012677">
    <property type="entry name" value="Nucleotide-bd_a/b_plait_sf"/>
</dbReference>
<dbReference type="InterPro" id="IPR035979">
    <property type="entry name" value="RBD_domain_sf"/>
</dbReference>
<dbReference type="InterPro" id="IPR000504">
    <property type="entry name" value="RRM_dom"/>
</dbReference>
<dbReference type="PANTHER" id="PTHR23204">
    <property type="entry name" value="CLEAVAGE AND POLYADENYLATION SPECIFIC FACTOR"/>
    <property type="match status" value="1"/>
</dbReference>
<dbReference type="Pfam" id="PF00076">
    <property type="entry name" value="RRM_1"/>
    <property type="match status" value="1"/>
</dbReference>
<dbReference type="SMART" id="SM00360">
    <property type="entry name" value="RRM"/>
    <property type="match status" value="1"/>
</dbReference>
<dbReference type="SUPFAM" id="SSF54928">
    <property type="entry name" value="RNA-binding domain, RBD"/>
    <property type="match status" value="1"/>
</dbReference>
<dbReference type="PROSITE" id="PS50102">
    <property type="entry name" value="RRM"/>
    <property type="match status" value="1"/>
</dbReference>
<evidence type="ECO:0000250" key="1">
    <source>
        <dbReference type="UniProtKB" id="Q16630"/>
    </source>
</evidence>
<evidence type="ECO:0000250" key="2">
    <source>
        <dbReference type="UniProtKB" id="Q6NVF9"/>
    </source>
</evidence>
<evidence type="ECO:0000255" key="3">
    <source>
        <dbReference type="PROSITE-ProRule" id="PRU00176"/>
    </source>
</evidence>
<evidence type="ECO:0000256" key="4">
    <source>
        <dbReference type="SAM" id="MobiDB-lite"/>
    </source>
</evidence>
<evidence type="ECO:0000305" key="5"/>
<protein>
    <recommendedName>
        <fullName evidence="1">Cleavage and polyadenylation specificity factor subunit 6</fullName>
    </recommendedName>
</protein>
<gene>
    <name evidence="1" type="primary">CPSF6</name>
</gene>
<name>CPSF6_BOVIN</name>
<organism>
    <name type="scientific">Bos taurus</name>
    <name type="common">Bovine</name>
    <dbReference type="NCBI Taxonomy" id="9913"/>
    <lineage>
        <taxon>Eukaryota</taxon>
        <taxon>Metazoa</taxon>
        <taxon>Chordata</taxon>
        <taxon>Craniata</taxon>
        <taxon>Vertebrata</taxon>
        <taxon>Euteleostomi</taxon>
        <taxon>Mammalia</taxon>
        <taxon>Eutheria</taxon>
        <taxon>Laurasiatheria</taxon>
        <taxon>Artiodactyla</taxon>
        <taxon>Ruminantia</taxon>
        <taxon>Pecora</taxon>
        <taxon>Bovidae</taxon>
        <taxon>Bovinae</taxon>
        <taxon>Bos</taxon>
    </lineage>
</organism>
<keyword id="KW-0963">Cytoplasm</keyword>
<keyword id="KW-0488">Methylation</keyword>
<keyword id="KW-0507">mRNA processing</keyword>
<keyword id="KW-0539">Nucleus</keyword>
<keyword id="KW-0597">Phosphoprotein</keyword>
<keyword id="KW-1185">Reference proteome</keyword>
<keyword id="KW-0694">RNA-binding</keyword>
<proteinExistence type="evidence at transcript level"/>
<sequence length="551" mass="59256">MADGVDHIDIYADVGEEFNQEAEYGGHDQIDLYDDVISPSANNGDAPEDRDYMDTLPPTVGDDVGKGAAPNVVYTYTGKRIALYIGNLTWWTTDEDLTEAVHSLGVNDILEIKFFENRANGQSKGFALVGVGSEASSKKLMDLLPKRELHGQNPVVTPCNKQFLSQFEMQSRKTTQSGQMSGEGKAGPPGGSSRAAFPQGGRGRGRFPGAVPGGDRFPGPAGPGGPPPPFPAGQTPPRPPLCPPGPPGPPGPPPPGQVLPPPLAGPPNRGDRPPPPVLFPGQPFGQPPLGPLPPGPPPPVPGYGPPPGPPPPQQGPPPPPGPFPPRPPGPLGPPLTLAPPPHLPGPPPGAPPPAPHVNPAFFPPPTNSGMPTSDSRGPPPTDPYGRPPPYDRGDYGPPGREMDTARTPLSEAEFEEIMNRNRAISSSAISRAVSDASAGDYGSAIETLVTAISLIKQSKVSADDRCKVLISSLQDCLHGIESKSYGSGSRRERSRERDHSRSREKSRRHKSRSRDRHDDYYRERSRERERHRDRDRDRDRERDREREYRHR</sequence>
<accession>Q0P5D2</accession>
<comment type="function">
    <text evidence="1">Component of the cleavage factor Im (CFIm) complex that functions as an activator of the pre-mRNA 3'-end cleavage and polyadenylation processing required for the maturation of pre-mRNA into functional mRNAs. CFIm contributes to the recruitment of multiprotein complexes on specific sequences on the pre-mRNA 3'-end, so called cleavage and polyadenylation signals (pA signals). Most pre-mRNAs contain multiple pA signals, resulting in alternative cleavage and polyadenylation (APA) producing mRNAs with variable 3'-end formation. The CFIm complex acts as a key regulator of cleavage and polyadenylation site choice during APA through its binding to 5'-UGUA-3' elements localized in the 3'-untranslated region (UTR) for a huge number of pre-mRNAs. CPSF6 enhances NUDT21/CPSF5 binding to 5'-UGUA-3' elements localized upstream of pA signals and promotes RNA looping, and hence activates directly the mRNA 3'-processing machinery. Plays a role in mRNA export.</text>
</comment>
<comment type="subunit">
    <text evidence="1 2">Component of the cleavage factor Im (CFIm) complex which is a heterotetramer composed of two subunits of NUDT21/CPSF5 and two subunits of CPSF6 or CPSF7 or a heterodimer of CPSF6 and CPSF7. The cleavage factor Im (CFIm) complex associates with the CPSF and CSTF complexes to promote the assembly of the core mRNA 3'-processing machinery. Associates with the exon junction complex (EJC). Associates with the 80S ribosome particle. Interacts (via the RRM domain) with NUDT21/CPSF5; this interaction is direct and enhances binding to RNA. Interacts (via Arg/Ser-rich domain) with FIP1L1 (preferentially via unphosphorylated form and Arg/Glu/Asp-rich domain); this interaction mediates, at least in part, the interaction between the CFIm and CPSF complexes and may be inhibited by CPSF6 hyper-phosphorylation. Interacts (via N-terminus) with NXF1; this interaction is direct. Interacts with SRSF3. Interacts with SRSF7. Interacts with SNRNP70. Interacts with TRA2B/SFRS10. Interacts with UPF1. Interacts with UPF3B. Interacts with VIRMA. Interacts (via Arg/Ser-rich domain) with TNPO3; promoting nuclear import of CPSF6 independently of its phosphorylation status (By similarity). Interacts with YTHDC1 (By similarity).</text>
</comment>
<comment type="subcellular location">
    <subcellularLocation>
        <location evidence="1">Nucleus</location>
    </subcellularLocation>
    <subcellularLocation>
        <location evidence="1">Nucleus</location>
        <location evidence="1">Nucleoplasm</location>
    </subcellularLocation>
    <subcellularLocation>
        <location evidence="1">Nucleus speckle</location>
    </subcellularLocation>
    <subcellularLocation>
        <location evidence="1">Cytoplasm</location>
    </subcellularLocation>
    <text evidence="1">Shuttles between the nucleus and the cytoplasm in a transcription- and XPO1/CRM1-independent manner, most probably in complex with the cleavage factor Im complex (CFIm). Colocalizes with PSPC1 in punctate subnuclear structures often located adjacent to nuclear speckles, called paraspeckles, and corresponding to interchromatin granules-associated zones (IGAZs). Distribution in speckles and paraspeckles varies during the cell cycle. Associates at sites of active transcription on nascent perichromatin fibrils (PFs) and perichromatin granules. Nuclear import is mediated via interaction with TNPO3 independently of CPSF6 phosphorylation status.</text>
</comment>
<comment type="domain">
    <text evidence="1">Contains an Arg/Ser-rich domain composed of arginine-serine dipeptide repeats within the C-terminal region that is necessary and sufficient for activating mRNA 3'-processing and alternative polyadenylation (APA).</text>
</comment>
<comment type="PTM">
    <text evidence="1">Phosphorylated. Phosphorylated in the Arg/Ser-rich domain by SRPK1, in vitro.</text>
</comment>
<comment type="PTM">
    <text evidence="1">Symmetrically dimethylated on arginine residues in the GAR motif by PRMT5 in a WDR77- and CLNS1A-dependent manner. Asymmetrically dimethylated on arginine residues in the GAR motif by PRMT1.</text>
</comment>
<comment type="similarity">
    <text evidence="5">Belongs to the RRM CPSF6/7 family.</text>
</comment>